<organism>
    <name type="scientific">Acinetobacter baylyi (strain ATCC 33305 / BD413 / ADP1)</name>
    <dbReference type="NCBI Taxonomy" id="62977"/>
    <lineage>
        <taxon>Bacteria</taxon>
        <taxon>Pseudomonadati</taxon>
        <taxon>Pseudomonadota</taxon>
        <taxon>Gammaproteobacteria</taxon>
        <taxon>Moraxellales</taxon>
        <taxon>Moraxellaceae</taxon>
        <taxon>Acinetobacter</taxon>
    </lineage>
</organism>
<protein>
    <recommendedName>
        <fullName evidence="1">Urease subunit gamma</fullName>
        <ecNumber evidence="1">3.5.1.5</ecNumber>
    </recommendedName>
    <alternativeName>
        <fullName evidence="1">Urea amidohydrolase subunit gamma</fullName>
    </alternativeName>
</protein>
<dbReference type="EC" id="3.5.1.5" evidence="1"/>
<dbReference type="EMBL" id="CR543861">
    <property type="protein sequence ID" value="CAG67974.1"/>
    <property type="molecule type" value="Genomic_DNA"/>
</dbReference>
<dbReference type="RefSeq" id="WP_004921570.1">
    <property type="nucleotide sequence ID" value="NC_005966.1"/>
</dbReference>
<dbReference type="SMR" id="Q6FD85"/>
<dbReference type="STRING" id="202950.GCA_001485005_01278"/>
<dbReference type="GeneID" id="45233525"/>
<dbReference type="KEGG" id="aci:ACIAD1089"/>
<dbReference type="eggNOG" id="COG0831">
    <property type="taxonomic scope" value="Bacteria"/>
</dbReference>
<dbReference type="HOGENOM" id="CLU_145825_1_0_6"/>
<dbReference type="OrthoDB" id="9797217at2"/>
<dbReference type="BioCyc" id="ASP62977:ACIAD_RS05005-MONOMER"/>
<dbReference type="UniPathway" id="UPA00258">
    <property type="reaction ID" value="UER00370"/>
</dbReference>
<dbReference type="Proteomes" id="UP000000430">
    <property type="component" value="Chromosome"/>
</dbReference>
<dbReference type="GO" id="GO:0005737">
    <property type="term" value="C:cytoplasm"/>
    <property type="evidence" value="ECO:0007669"/>
    <property type="project" value="UniProtKB-SubCell"/>
</dbReference>
<dbReference type="GO" id="GO:0016151">
    <property type="term" value="F:nickel cation binding"/>
    <property type="evidence" value="ECO:0007669"/>
    <property type="project" value="InterPro"/>
</dbReference>
<dbReference type="GO" id="GO:0009039">
    <property type="term" value="F:urease activity"/>
    <property type="evidence" value="ECO:0007669"/>
    <property type="project" value="UniProtKB-UniRule"/>
</dbReference>
<dbReference type="GO" id="GO:0043419">
    <property type="term" value="P:urea catabolic process"/>
    <property type="evidence" value="ECO:0007669"/>
    <property type="project" value="UniProtKB-UniRule"/>
</dbReference>
<dbReference type="CDD" id="cd00390">
    <property type="entry name" value="Urease_gamma"/>
    <property type="match status" value="1"/>
</dbReference>
<dbReference type="Gene3D" id="3.30.280.10">
    <property type="entry name" value="Urease, gamma-like subunit"/>
    <property type="match status" value="1"/>
</dbReference>
<dbReference type="HAMAP" id="MF_00739">
    <property type="entry name" value="Urease_gamma"/>
    <property type="match status" value="1"/>
</dbReference>
<dbReference type="InterPro" id="IPR012010">
    <property type="entry name" value="Urease_gamma"/>
</dbReference>
<dbReference type="InterPro" id="IPR002026">
    <property type="entry name" value="Urease_gamma/gamma-beta_su"/>
</dbReference>
<dbReference type="InterPro" id="IPR036463">
    <property type="entry name" value="Urease_gamma_sf"/>
</dbReference>
<dbReference type="InterPro" id="IPR050069">
    <property type="entry name" value="Urease_subunit"/>
</dbReference>
<dbReference type="NCBIfam" id="NF009712">
    <property type="entry name" value="PRK13241.1"/>
    <property type="match status" value="1"/>
</dbReference>
<dbReference type="NCBIfam" id="TIGR00193">
    <property type="entry name" value="urease_gam"/>
    <property type="match status" value="1"/>
</dbReference>
<dbReference type="PANTHER" id="PTHR33569">
    <property type="entry name" value="UREASE"/>
    <property type="match status" value="1"/>
</dbReference>
<dbReference type="PANTHER" id="PTHR33569:SF1">
    <property type="entry name" value="UREASE"/>
    <property type="match status" value="1"/>
</dbReference>
<dbReference type="Pfam" id="PF00547">
    <property type="entry name" value="Urease_gamma"/>
    <property type="match status" value="1"/>
</dbReference>
<dbReference type="PIRSF" id="PIRSF001223">
    <property type="entry name" value="Urease_gamma"/>
    <property type="match status" value="1"/>
</dbReference>
<dbReference type="SUPFAM" id="SSF54111">
    <property type="entry name" value="Urease, gamma-subunit"/>
    <property type="match status" value="1"/>
</dbReference>
<accession>Q6FD85</accession>
<comment type="catalytic activity">
    <reaction evidence="1">
        <text>urea + 2 H2O + H(+) = hydrogencarbonate + 2 NH4(+)</text>
        <dbReference type="Rhea" id="RHEA:20557"/>
        <dbReference type="ChEBI" id="CHEBI:15377"/>
        <dbReference type="ChEBI" id="CHEBI:15378"/>
        <dbReference type="ChEBI" id="CHEBI:16199"/>
        <dbReference type="ChEBI" id="CHEBI:17544"/>
        <dbReference type="ChEBI" id="CHEBI:28938"/>
        <dbReference type="EC" id="3.5.1.5"/>
    </reaction>
</comment>
<comment type="pathway">
    <text evidence="1">Nitrogen metabolism; urea degradation; CO(2) and NH(3) from urea (urease route): step 1/1.</text>
</comment>
<comment type="subunit">
    <text evidence="1">Heterotrimer of UreA (gamma), UreB (beta) and UreC (alpha) subunits. Three heterotrimers associate to form the active enzyme.</text>
</comment>
<comment type="subcellular location">
    <subcellularLocation>
        <location evidence="1">Cytoplasm</location>
    </subcellularLocation>
</comment>
<comment type="similarity">
    <text evidence="1">Belongs to the urease gamma subunit family.</text>
</comment>
<proteinExistence type="inferred from homology"/>
<evidence type="ECO:0000255" key="1">
    <source>
        <dbReference type="HAMAP-Rule" id="MF_00739"/>
    </source>
</evidence>
<name>URE3_ACIAD</name>
<reference key="1">
    <citation type="journal article" date="2004" name="Nucleic Acids Res.">
        <title>Unique features revealed by the genome sequence of Acinetobacter sp. ADP1, a versatile and naturally transformation competent bacterium.</title>
        <authorList>
            <person name="Barbe V."/>
            <person name="Vallenet D."/>
            <person name="Fonknechten N."/>
            <person name="Kreimeyer A."/>
            <person name="Oztas S."/>
            <person name="Labarre L."/>
            <person name="Cruveiller S."/>
            <person name="Robert C."/>
            <person name="Duprat S."/>
            <person name="Wincker P."/>
            <person name="Ornston L.N."/>
            <person name="Weissenbach J."/>
            <person name="Marliere P."/>
            <person name="Cohen G.N."/>
            <person name="Medigue C."/>
        </authorList>
    </citation>
    <scope>NUCLEOTIDE SEQUENCE [LARGE SCALE GENOMIC DNA]</scope>
    <source>
        <strain>ATCC 33305 / BD413 / ADP1</strain>
    </source>
</reference>
<feature type="chain" id="PRO_0000097983" description="Urease subunit gamma">
    <location>
        <begin position="1"/>
        <end position="100"/>
    </location>
</feature>
<sequence length="100" mass="10835">MELNPTEKDKMLIFTAGLVAERRKARGLKLNYPEAVAFISAALLEGARDGMSVAELMHYGTTLLSKSDVMDGVAEMIAEVQVEATFPDGSKLVTVHQPIV</sequence>
<keyword id="KW-0963">Cytoplasm</keyword>
<keyword id="KW-0378">Hydrolase</keyword>
<gene>
    <name evidence="1" type="primary">ureA</name>
    <name type="ordered locus">ACIAD1089</name>
</gene>